<proteinExistence type="evidence at transcript level"/>
<gene>
    <name type="primary">fto</name>
</gene>
<sequence>MKKRGVLCEEEKEVKKRKLLEQIGDGHLPYLSSKDDTFYDLWGSCYSKLTLLQAKHVPVDLHHTVQNAFLSLLRNGCLFQDLVRLKGKDIITPVSRILIGRPGYTYKYLNTRLFAVPWINDELNTQYSTRNLLETYKAFSDLNDFLYSQTVNELQKLGKIHKDNFFQHSEYKEQIKSDQRPSTSNYENVKLHSMESFNVTLINYMDPQNMSFLKEEPYFGMGKMAVSWHHDENLVEQSTVAVYNYSYQESSNDVNGEDEDPTRWHVGLKIAWDIETPGLLMPLSSGDCYLMLDDLNKTHQHCVIAGCQPRFSSTHRVAESSTGTLQYIKSQCNSALQNLHMNPDTGAADLKNLEPNVLGQTEEIHNEVEFEWLRQFWFQGKRYNKCTTFWKEAMTELEIHWKQMETMTSLVLKAIENENLTVDEKCNILKNILPPLVERQDLRHDWRERCRSKLAKMLPPDQVPCFYPYWNDDNKTMPLPFDLHNIISALQKTLEENELKL</sequence>
<name>FTO_XENLA</name>
<comment type="function">
    <text evidence="2">RNA demethylase that mediates oxidative demethylation of different RNA species, such as mRNAs, tRNAs and snRNAs, and acts as a regulator of fat mass, adipogenesis and energy homeostasis. Specifically demethylates N(6)-methyladenosine (m6A) RNA, the most prevalent internal modification of messenger RNA (mRNA) in higher eukaryotes. M6A demethylation by FTO affects mRNA expression and stability. Also able to demethylate m6A in U6 small nuclear RNA (snRNA). Mediates demethylation of N(6),2'-O-dimethyladenosine cap (m6A(m)), by demethylating the N(6)-methyladenosine at the second transcribed position of mRNAs and U6 snRNA. Demethylation of m6A(m) in the 5'-cap by FTO affects mRNA stability by promoting susceptibility to decapping. Also acts as a tRNA demethylase by removing N(1)-methyladenine from various tRNAs.</text>
</comment>
<comment type="catalytic activity">
    <reaction evidence="2">
        <text>a 5'-end (N(7)-methyl 5'-triphosphoguanosine)-(N(6),2'-O-dimethyladenosine) in mRNA + 2-oxoglutarate + O2 = a 5'-end (N(7)-methyl 5'-triphosphoguanosine)-(2'-O-methyladenosine) in mRNA + formaldehyde + succinate + CO2</text>
        <dbReference type="Rhea" id="RHEA:57896"/>
        <dbReference type="Rhea" id="RHEA-COMP:11518"/>
        <dbReference type="Rhea" id="RHEA-COMP:11519"/>
        <dbReference type="ChEBI" id="CHEBI:15379"/>
        <dbReference type="ChEBI" id="CHEBI:16526"/>
        <dbReference type="ChEBI" id="CHEBI:16810"/>
        <dbReference type="ChEBI" id="CHEBI:16842"/>
        <dbReference type="ChEBI" id="CHEBI:30031"/>
        <dbReference type="ChEBI" id="CHEBI:85958"/>
        <dbReference type="ChEBI" id="CHEBI:85959"/>
    </reaction>
</comment>
<comment type="catalytic activity">
    <reaction evidence="2">
        <text>an N(6)-methyladenosine in mRNA + 2-oxoglutarate + O2 = an adenosine in mRNA + formaldehyde + succinate + CO2</text>
        <dbReference type="Rhea" id="RHEA:49520"/>
        <dbReference type="Rhea" id="RHEA-COMP:12414"/>
        <dbReference type="Rhea" id="RHEA-COMP:12417"/>
        <dbReference type="ChEBI" id="CHEBI:15379"/>
        <dbReference type="ChEBI" id="CHEBI:16526"/>
        <dbReference type="ChEBI" id="CHEBI:16810"/>
        <dbReference type="ChEBI" id="CHEBI:16842"/>
        <dbReference type="ChEBI" id="CHEBI:30031"/>
        <dbReference type="ChEBI" id="CHEBI:74411"/>
        <dbReference type="ChEBI" id="CHEBI:74449"/>
        <dbReference type="EC" id="1.14.11.53"/>
    </reaction>
</comment>
<comment type="catalytic activity">
    <reaction evidence="2">
        <text>N(6)-methyladenosine in U6 snRNA + 2-oxoglutarate + O2 = adenosine in U6 snRNA + formaldehyde + succinate + CO2</text>
        <dbReference type="Rhea" id="RHEA:57900"/>
        <dbReference type="Rhea" id="RHEA-COMP:13573"/>
        <dbReference type="Rhea" id="RHEA-COMP:13574"/>
        <dbReference type="ChEBI" id="CHEBI:15379"/>
        <dbReference type="ChEBI" id="CHEBI:16526"/>
        <dbReference type="ChEBI" id="CHEBI:16810"/>
        <dbReference type="ChEBI" id="CHEBI:16842"/>
        <dbReference type="ChEBI" id="CHEBI:30031"/>
        <dbReference type="ChEBI" id="CHEBI:74411"/>
        <dbReference type="ChEBI" id="CHEBI:74449"/>
    </reaction>
</comment>
<comment type="catalytic activity">
    <reaction evidence="2">
        <text>a 5'-end (N(7)-methyl 5'-triphosphoguanosine)-(N(6),2'-O-dimethyladenosine) in U6 snRNA + 2-oxoglutarate + O2 = a 5'-end (N(7)-methyl 5'-triphosphoguanosine)-(2'-O-methyladenosine) in U6 snRNA + formaldehyde + succinate + CO2</text>
        <dbReference type="Rhea" id="RHEA:57904"/>
        <dbReference type="Rhea" id="RHEA-COMP:15030"/>
        <dbReference type="Rhea" id="RHEA-COMP:15031"/>
        <dbReference type="ChEBI" id="CHEBI:15379"/>
        <dbReference type="ChEBI" id="CHEBI:16526"/>
        <dbReference type="ChEBI" id="CHEBI:16810"/>
        <dbReference type="ChEBI" id="CHEBI:16842"/>
        <dbReference type="ChEBI" id="CHEBI:30031"/>
        <dbReference type="ChEBI" id="CHEBI:85958"/>
        <dbReference type="ChEBI" id="CHEBI:85959"/>
    </reaction>
</comment>
<comment type="catalytic activity">
    <reaction evidence="2">
        <text>an N(1)-methyladenosine in tRNA + 2-oxoglutarate + O2 = an adenosine in tRNA + formaldehyde + succinate + CO2</text>
        <dbReference type="Rhea" id="RHEA:54576"/>
        <dbReference type="Rhea" id="RHEA-COMP:10242"/>
        <dbReference type="Rhea" id="RHEA-COMP:12312"/>
        <dbReference type="ChEBI" id="CHEBI:15379"/>
        <dbReference type="ChEBI" id="CHEBI:16526"/>
        <dbReference type="ChEBI" id="CHEBI:16810"/>
        <dbReference type="ChEBI" id="CHEBI:16842"/>
        <dbReference type="ChEBI" id="CHEBI:30031"/>
        <dbReference type="ChEBI" id="CHEBI:74411"/>
        <dbReference type="ChEBI" id="CHEBI:74491"/>
    </reaction>
</comment>
<comment type="cofactor">
    <cofactor evidence="2">
        <name>Fe(2+)</name>
        <dbReference type="ChEBI" id="CHEBI:29033"/>
    </cofactor>
    <text evidence="2">Binds 1 Fe(2+) ion per subunit.</text>
</comment>
<comment type="activity regulation">
    <text evidence="1">Activated by ascorbate. Inhibited by N-oxalylglycine, fumarate and succinate.</text>
</comment>
<comment type="subunit">
    <text evidence="1">Monomer. May also exist as homodimer.</text>
</comment>
<comment type="subcellular location">
    <subcellularLocation>
        <location evidence="2">Nucleus</location>
    </subcellularLocation>
    <subcellularLocation>
        <location evidence="2">Nucleus speckle</location>
    </subcellularLocation>
    <subcellularLocation>
        <location evidence="2">Cytoplasm</location>
    </subcellularLocation>
    <text evidence="2">Localizes mainly in the nucleus, where it is able to demethylate N(6)-methyladenosine (m6A) and N(6),2'-O-dimethyladenosine cap (m6A(m)) in U6 small nuclear RNA (snRNA), N(1)-methyladenine from tRNAs and internal m6A in mRNAs. In the cytoplasm, mediates demethylation of m6A and m6A(m) in mRNAs and N(1)-methyladenine from tRNAs.</text>
</comment>
<comment type="domain">
    <text evidence="2">The 3D-structure of the Fe2OG dioxygenase domain is similar to that of the Fe2OG dioxygenase domain found in the bacterial DNA repair dioxygenase alkB and its mammalian orthologs, but sequence similarity is very low. As a consequence, the domain is not detected by protein signature databases.</text>
</comment>
<comment type="similarity">
    <text evidence="3">Belongs to the fto family.</text>
</comment>
<organism>
    <name type="scientific">Xenopus laevis</name>
    <name type="common">African clawed frog</name>
    <dbReference type="NCBI Taxonomy" id="8355"/>
    <lineage>
        <taxon>Eukaryota</taxon>
        <taxon>Metazoa</taxon>
        <taxon>Chordata</taxon>
        <taxon>Craniata</taxon>
        <taxon>Vertebrata</taxon>
        <taxon>Euteleostomi</taxon>
        <taxon>Amphibia</taxon>
        <taxon>Batrachia</taxon>
        <taxon>Anura</taxon>
        <taxon>Pipoidea</taxon>
        <taxon>Pipidae</taxon>
        <taxon>Xenopodinae</taxon>
        <taxon>Xenopus</taxon>
        <taxon>Xenopus</taxon>
    </lineage>
</organism>
<dbReference type="EC" id="1.14.11.-" evidence="2"/>
<dbReference type="EC" id="1.14.11.53" evidence="2"/>
<dbReference type="EMBL" id="BC079990">
    <property type="protein sequence ID" value="AAH79990.1"/>
    <property type="molecule type" value="mRNA"/>
</dbReference>
<dbReference type="RefSeq" id="NP_001087481.1">
    <property type="nucleotide sequence ID" value="NM_001094012.1"/>
</dbReference>
<dbReference type="SMR" id="Q68F54"/>
<dbReference type="GeneID" id="447305"/>
<dbReference type="KEGG" id="xla:447305"/>
<dbReference type="AGR" id="Xenbase:XB-GENE-972569"/>
<dbReference type="CTD" id="447305"/>
<dbReference type="Xenbase" id="XB-GENE-972569">
    <property type="gene designation" value="fto.L"/>
</dbReference>
<dbReference type="OrthoDB" id="46257at2759"/>
<dbReference type="Proteomes" id="UP000186698">
    <property type="component" value="Chromosome 4L"/>
</dbReference>
<dbReference type="Bgee" id="447305">
    <property type="expression patterns" value="Expressed in ovary and 19 other cell types or tissues"/>
</dbReference>
<dbReference type="GO" id="GO:0005737">
    <property type="term" value="C:cytoplasm"/>
    <property type="evidence" value="ECO:0000250"/>
    <property type="project" value="UniProtKB"/>
</dbReference>
<dbReference type="GO" id="GO:0016607">
    <property type="term" value="C:nuclear speck"/>
    <property type="evidence" value="ECO:0000250"/>
    <property type="project" value="UniProtKB"/>
</dbReference>
<dbReference type="GO" id="GO:0005634">
    <property type="term" value="C:nucleus"/>
    <property type="evidence" value="ECO:0000250"/>
    <property type="project" value="UniProtKB"/>
</dbReference>
<dbReference type="GO" id="GO:0035516">
    <property type="term" value="F:broad specificity oxidative DNA demethylase activity"/>
    <property type="evidence" value="ECO:0000250"/>
    <property type="project" value="UniProtKB"/>
</dbReference>
<dbReference type="GO" id="GO:0008198">
    <property type="term" value="F:ferrous iron binding"/>
    <property type="evidence" value="ECO:0000318"/>
    <property type="project" value="GO_Central"/>
</dbReference>
<dbReference type="GO" id="GO:1990931">
    <property type="term" value="F:mRNA N6-methyladenosine dioxygenase activity"/>
    <property type="evidence" value="ECO:0000250"/>
    <property type="project" value="UniProtKB"/>
</dbReference>
<dbReference type="GO" id="GO:0035515">
    <property type="term" value="F:oxidative RNA demethylase activity"/>
    <property type="evidence" value="ECO:0000250"/>
    <property type="project" value="UniProtKB"/>
</dbReference>
<dbReference type="GO" id="GO:1990984">
    <property type="term" value="F:tRNA demethylase activity"/>
    <property type="evidence" value="ECO:0000250"/>
    <property type="project" value="UniProtKB"/>
</dbReference>
<dbReference type="GO" id="GO:0006307">
    <property type="term" value="P:DNA alkylation repair"/>
    <property type="evidence" value="ECO:0007669"/>
    <property type="project" value="InterPro"/>
</dbReference>
<dbReference type="GO" id="GO:0044458">
    <property type="term" value="P:motile cilium assembly"/>
    <property type="evidence" value="ECO:0000315"/>
    <property type="project" value="Xenbase"/>
</dbReference>
<dbReference type="GO" id="GO:0061157">
    <property type="term" value="P:mRNA destabilization"/>
    <property type="evidence" value="ECO:0000250"/>
    <property type="project" value="UniProtKB"/>
</dbReference>
<dbReference type="GO" id="GO:0040014">
    <property type="term" value="P:regulation of multicellular organism growth"/>
    <property type="evidence" value="ECO:0007669"/>
    <property type="project" value="InterPro"/>
</dbReference>
<dbReference type="GO" id="GO:0042245">
    <property type="term" value="P:RNA repair"/>
    <property type="evidence" value="ECO:0007669"/>
    <property type="project" value="InterPro"/>
</dbReference>
<dbReference type="FunFam" id="1.20.58.1470:FF:000002">
    <property type="entry name" value="Alpha-ketoglutarate-dependent dioxygenase FTO"/>
    <property type="match status" value="1"/>
</dbReference>
<dbReference type="FunFam" id="2.60.120.590:FF:000001">
    <property type="entry name" value="FTO, alpha-ketoglutarate dependent dioxygenase"/>
    <property type="match status" value="1"/>
</dbReference>
<dbReference type="Gene3D" id="2.60.120.590">
    <property type="entry name" value="Alpha-ketoglutarate-dependent dioxygenase AlkB-like"/>
    <property type="match status" value="1"/>
</dbReference>
<dbReference type="Gene3D" id="1.20.58.1470">
    <property type="entry name" value="FTO C-terminal domain"/>
    <property type="match status" value="1"/>
</dbReference>
<dbReference type="InterPro" id="IPR037151">
    <property type="entry name" value="AlkB-like_sf"/>
</dbReference>
<dbReference type="InterPro" id="IPR032868">
    <property type="entry name" value="FTO"/>
</dbReference>
<dbReference type="InterPro" id="IPR024366">
    <property type="entry name" value="FTO_C"/>
</dbReference>
<dbReference type="InterPro" id="IPR038413">
    <property type="entry name" value="FTO_C_sf"/>
</dbReference>
<dbReference type="InterPro" id="IPR024367">
    <property type="entry name" value="FTO_cat_dom"/>
</dbReference>
<dbReference type="PANTHER" id="PTHR31291">
    <property type="entry name" value="ALPHA-KETOGLUTARATE-DEPENDENT DIOXYGENASE FTO"/>
    <property type="match status" value="1"/>
</dbReference>
<dbReference type="PANTHER" id="PTHR31291:SF2">
    <property type="entry name" value="ALPHA-KETOGLUTARATE-DEPENDENT DIOXYGENASE FTO"/>
    <property type="match status" value="1"/>
</dbReference>
<dbReference type="Pfam" id="PF12934">
    <property type="entry name" value="FTO_CTD"/>
    <property type="match status" value="1"/>
</dbReference>
<dbReference type="Pfam" id="PF12933">
    <property type="entry name" value="FTO_NTD"/>
    <property type="match status" value="1"/>
</dbReference>
<dbReference type="SMART" id="SM01223">
    <property type="entry name" value="FTO_NTD"/>
    <property type="match status" value="1"/>
</dbReference>
<keyword id="KW-0963">Cytoplasm</keyword>
<keyword id="KW-0223">Dioxygenase</keyword>
<keyword id="KW-0408">Iron</keyword>
<keyword id="KW-0479">Metal-binding</keyword>
<keyword id="KW-0539">Nucleus</keyword>
<keyword id="KW-0560">Oxidoreductase</keyword>
<keyword id="KW-1185">Reference proteome</keyword>
<reference key="1">
    <citation type="submission" date="2004-08" db="EMBL/GenBank/DDBJ databases">
        <authorList>
            <consortium name="NIH - Xenopus Gene Collection (XGC) project"/>
        </authorList>
    </citation>
    <scope>NUCLEOTIDE SEQUENCE [LARGE SCALE MRNA]</scope>
    <source>
        <tissue>Embryo</tissue>
    </source>
</reference>
<feature type="chain" id="PRO_0000286167" description="Alpha-ketoglutarate-dependent dioxygenase FTO">
    <location>
        <begin position="1"/>
        <end position="501"/>
    </location>
</feature>
<feature type="region of interest" description="Fe2OG dioxygenase domain" evidence="2">
    <location>
        <begin position="32"/>
        <end position="321"/>
    </location>
</feature>
<feature type="region of interest" description="Loop L1; predicted to block binding of double-stranded DNA or RNA" evidence="2">
    <location>
        <begin position="211"/>
        <end position="222"/>
    </location>
</feature>
<feature type="binding site" evidence="2">
    <location>
        <position position="96"/>
    </location>
    <ligand>
        <name>substrate</name>
    </ligand>
</feature>
<feature type="binding site" evidence="2">
    <location>
        <position position="108"/>
    </location>
    <ligand>
        <name>substrate</name>
    </ligand>
</feature>
<feature type="binding site" evidence="2">
    <location>
        <position position="203"/>
    </location>
    <ligand>
        <name>2-oxoglutarate</name>
        <dbReference type="ChEBI" id="CHEBI:16810"/>
    </ligand>
</feature>
<feature type="binding site" evidence="2">
    <location>
        <begin position="229"/>
        <end position="232"/>
    </location>
    <ligand>
        <name>substrate</name>
    </ligand>
</feature>
<feature type="binding site" evidence="2">
    <location>
        <position position="229"/>
    </location>
    <ligand>
        <name>Fe cation</name>
        <dbReference type="ChEBI" id="CHEBI:24875"/>
        <note>catalytic</note>
    </ligand>
</feature>
<feature type="binding site" evidence="2">
    <location>
        <position position="231"/>
    </location>
    <ligand>
        <name>Fe cation</name>
        <dbReference type="ChEBI" id="CHEBI:24875"/>
        <note>catalytic</note>
    </ligand>
</feature>
<feature type="binding site" evidence="2">
    <location>
        <position position="289"/>
    </location>
    <ligand>
        <name>2-oxoglutarate</name>
        <dbReference type="ChEBI" id="CHEBI:16810"/>
    </ligand>
</feature>
<feature type="binding site" evidence="2">
    <location>
        <position position="301"/>
    </location>
    <ligand>
        <name>Fe cation</name>
        <dbReference type="ChEBI" id="CHEBI:24875"/>
        <note>catalytic</note>
    </ligand>
</feature>
<feature type="binding site" evidence="2">
    <location>
        <begin position="310"/>
        <end position="312"/>
    </location>
    <ligand>
        <name>2-oxoglutarate</name>
        <dbReference type="ChEBI" id="CHEBI:16810"/>
    </ligand>
</feature>
<feature type="binding site" evidence="2">
    <location>
        <position position="314"/>
    </location>
    <ligand>
        <name>2-oxoglutarate</name>
        <dbReference type="ChEBI" id="CHEBI:16810"/>
    </ligand>
</feature>
<feature type="binding site" evidence="2">
    <location>
        <position position="316"/>
    </location>
    <ligand>
        <name>2-oxoglutarate</name>
        <dbReference type="ChEBI" id="CHEBI:16810"/>
    </ligand>
</feature>
<accession>Q68F54</accession>
<protein>
    <recommendedName>
        <fullName>Alpha-ketoglutarate-dependent dioxygenase FTO</fullName>
    </recommendedName>
    <alternativeName>
        <fullName>U6 small nuclear RNA (2'-O-methyladenosine-N(6)-)-demethylase FTO</fullName>
        <ecNumber evidence="2">1.14.11.-</ecNumber>
    </alternativeName>
    <alternativeName>
        <fullName>U6 small nuclear RNA N(6)-methyladenosine-demethylase FTO</fullName>
        <ecNumber evidence="2">1.14.11.-</ecNumber>
    </alternativeName>
    <alternativeName>
        <fullName>mRNA (2'-O-methyladenosine-N(6)-)-demethylase FTO</fullName>
        <shortName>m6A(m)-demethylase FTO</shortName>
        <ecNumber evidence="2">1.14.11.-</ecNumber>
    </alternativeName>
    <alternativeName>
        <fullName>mRNA N(6)-methyladenosine demethylase FTO</fullName>
        <ecNumber evidence="2">1.14.11.53</ecNumber>
    </alternativeName>
    <alternativeName>
        <fullName>tRNA N1-methyl adenine demethylase FTO</fullName>
        <ecNumber evidence="2">1.14.11.-</ecNumber>
    </alternativeName>
</protein>
<evidence type="ECO:0000250" key="1">
    <source>
        <dbReference type="UniProtKB" id="Q8BGW1"/>
    </source>
</evidence>
<evidence type="ECO:0000250" key="2">
    <source>
        <dbReference type="UniProtKB" id="Q9C0B1"/>
    </source>
</evidence>
<evidence type="ECO:0000305" key="3"/>